<sequence>MASAASVTSLADEVNCPICQGTLREPVTIDCGHNFCRACLTRYCEIPGPDLEESPTCPLCKEPFRPGSFRPNWQLANVVENIERLQLVSTLGLGEEDVCQEHGEKIYFFCEDDEMQLCVVCREAGEHATHTMRFLEDAAAPYREQIHKCLKRLRKEREETQEIQSRENKRMQVLLTQVSTKRQQVISEFAHLRKFLEEQQSILLAQLESLDGDILKQRDEFDLLIAGESCRFSALIEELEEKNERPARELLTDIRSTLIRCETRKCRKPVAVSPELGQRIRDFPQQALPLQREMKMFLEKLCFELDYEPAHISLDPQTSHPKLLLSEDHQRAQFSYKWQNSPDNPQRFDRATCVLAHTGITGGRHTWVVSIDLAHGGSCTVGVVSEDVQRKGELRLRPEEGVWAVRLAWGFVSALGSFPTRLTLKEQPWQVRVSLDYEVGWVTFTNAVTREPIYTFTASFTRKVIPFFGLWGRGSSFFLSS</sequence>
<protein>
    <recommendedName>
        <fullName>Tripartite motif-containing protein 10</fullName>
    </recommendedName>
    <alternativeName>
        <fullName>B30-RING finger protein</fullName>
    </alternativeName>
    <alternativeName>
        <fullName>RING finger protein 9</fullName>
    </alternativeName>
</protein>
<accession>Q7YR32</accession>
<accession>Q1XHU7</accession>
<accession>Q1XHU9</accession>
<name>TRI10_PANTR</name>
<reference key="1">
    <citation type="journal article" date="2003" name="Proc. Natl. Acad. Sci. U.S.A.">
        <title>Comparative sequencing of human and chimpanzee MHC class I regions unveils insertions/deletions as the major path to genomic divergence.</title>
        <authorList>
            <person name="Anzai T."/>
            <person name="Shiina T."/>
            <person name="Kimura N."/>
            <person name="Yanagiya K."/>
            <person name="Kohara S."/>
            <person name="Shigenari A."/>
            <person name="Yamagata T."/>
            <person name="Kulski J.K."/>
            <person name="Naruse T.K."/>
            <person name="Fujimori Y."/>
            <person name="Fukuzumi Y."/>
            <person name="Yamazaki M."/>
            <person name="Tashiro H."/>
            <person name="Iwamoto C."/>
            <person name="Umehara Y."/>
            <person name="Imanishi T."/>
            <person name="Meyer A."/>
            <person name="Ikeo K."/>
            <person name="Gojobori T."/>
            <person name="Bahram S."/>
            <person name="Inoko H."/>
        </authorList>
    </citation>
    <scope>NUCLEOTIDE SEQUENCE [LARGE SCALE GENOMIC DNA]</scope>
</reference>
<reference key="2">
    <citation type="journal article" date="2006" name="Genetics">
        <title>Rapid evolution of major histocompatibility complex class I genes in primates generates new disease alleles in humans via hitchhiking diversity.</title>
        <authorList>
            <person name="Shiina T."/>
            <person name="Ota M."/>
            <person name="Shimizu S."/>
            <person name="Katsuyama Y."/>
            <person name="Hashimoto N."/>
            <person name="Takasu M."/>
            <person name="Anzai T."/>
            <person name="Kulski J.K."/>
            <person name="Kikkawa E."/>
            <person name="Naruse T."/>
            <person name="Kimura N."/>
            <person name="Yanagiya K."/>
            <person name="Watanabe A."/>
            <person name="Hosomichi K."/>
            <person name="Kohara S."/>
            <person name="Iwamoto C."/>
            <person name="Umehara Y."/>
            <person name="Meyer A."/>
            <person name="Wanner V."/>
            <person name="Sano K."/>
            <person name="Macquin C."/>
            <person name="Ikeo K."/>
            <person name="Tokunaga K."/>
            <person name="Gojobori T."/>
            <person name="Inoko H."/>
            <person name="Bahram S."/>
        </authorList>
    </citation>
    <scope>NUCLEOTIDE SEQUENCE [LARGE SCALE GENOMIC DNA]</scope>
</reference>
<proteinExistence type="inferred from homology"/>
<comment type="function">
    <text evidence="1 2">E3 ligase that plays an essential role in the differentiation and survival of terminal erythroid cells. May directly bind to PTEN and promote its ubiquitination, resulting in its proteasomal degradation and activation of hypertrophic signaling (By similarity). In addition, plays a role in immune response regulation by repressing the phosphorylation of STAT1 and STAT2 in the interferon/JAK/STAT signaling pathway independent of its E3 ligase activity. Mechanistically, interacts with the intracellular domain of IFNAR1 and thereby inhibits the association of TYK2 and IFNAR1 (By similarity).</text>
</comment>
<comment type="subunit">
    <text evidence="1">Interacts with IFNAR1; this interaction prevents association of IFNAR1 with TYK2.</text>
</comment>
<comment type="subcellular location">
    <subcellularLocation>
        <location evidence="1">Cytoplasm</location>
    </subcellularLocation>
</comment>
<comment type="similarity">
    <text evidence="7">Belongs to the TRIM/RBCC family.</text>
</comment>
<dbReference type="EMBL" id="BA000041">
    <property type="protein sequence ID" value="BAC78185.1"/>
    <property type="molecule type" value="Genomic_DNA"/>
</dbReference>
<dbReference type="EMBL" id="AB210201">
    <property type="protein sequence ID" value="BAE92821.1"/>
    <property type="molecule type" value="Genomic_DNA"/>
</dbReference>
<dbReference type="EMBL" id="AB210202">
    <property type="protein sequence ID" value="BAE92823.1"/>
    <property type="molecule type" value="Genomic_DNA"/>
</dbReference>
<dbReference type="RefSeq" id="NP_001065287.1">
    <property type="nucleotide sequence ID" value="NM_001071819.1"/>
</dbReference>
<dbReference type="RefSeq" id="XP_054541520.1">
    <property type="nucleotide sequence ID" value="XM_054685545.2"/>
</dbReference>
<dbReference type="SMR" id="Q7YR32"/>
<dbReference type="FunCoup" id="Q7YR32">
    <property type="interactions" value="9"/>
</dbReference>
<dbReference type="STRING" id="9598.ENSPTRP00000030567"/>
<dbReference type="PaxDb" id="9598-ENSPTRP00000030567"/>
<dbReference type="GeneID" id="742346"/>
<dbReference type="KEGG" id="ptr:742346"/>
<dbReference type="CTD" id="10107"/>
<dbReference type="eggNOG" id="KOG2177">
    <property type="taxonomic scope" value="Eukaryota"/>
</dbReference>
<dbReference type="HOGENOM" id="CLU_013137_0_3_1"/>
<dbReference type="InParanoid" id="Q7YR32"/>
<dbReference type="OrthoDB" id="2736at9604"/>
<dbReference type="TreeFam" id="TF342569"/>
<dbReference type="Proteomes" id="UP000002277">
    <property type="component" value="Unplaced"/>
</dbReference>
<dbReference type="GO" id="GO:0005737">
    <property type="term" value="C:cytoplasm"/>
    <property type="evidence" value="ECO:0000318"/>
    <property type="project" value="GO_Central"/>
</dbReference>
<dbReference type="GO" id="GO:0061630">
    <property type="term" value="F:ubiquitin protein ligase activity"/>
    <property type="evidence" value="ECO:0000318"/>
    <property type="project" value="GO_Central"/>
</dbReference>
<dbReference type="GO" id="GO:0008270">
    <property type="term" value="F:zinc ion binding"/>
    <property type="evidence" value="ECO:0007669"/>
    <property type="project" value="UniProtKB-KW"/>
</dbReference>
<dbReference type="GO" id="GO:0045087">
    <property type="term" value="P:innate immune response"/>
    <property type="evidence" value="ECO:0000318"/>
    <property type="project" value="GO_Central"/>
</dbReference>
<dbReference type="CDD" id="cd19765">
    <property type="entry name" value="Bbox2_TRIM10-like"/>
    <property type="match status" value="1"/>
</dbReference>
<dbReference type="CDD" id="cd16593">
    <property type="entry name" value="RING-HC_TRIM10_C-IV"/>
    <property type="match status" value="1"/>
</dbReference>
<dbReference type="CDD" id="cd15827">
    <property type="entry name" value="SPRY_PRY_TRIM10"/>
    <property type="match status" value="1"/>
</dbReference>
<dbReference type="FunFam" id="3.30.40.10:FF:000248">
    <property type="entry name" value="E3 ubiquitin-protein ligase TRIM68"/>
    <property type="match status" value="1"/>
</dbReference>
<dbReference type="FunFam" id="2.60.120.920:FF:000044">
    <property type="entry name" value="Tripartite motif-containing protein 10"/>
    <property type="match status" value="1"/>
</dbReference>
<dbReference type="Gene3D" id="2.60.120.920">
    <property type="match status" value="1"/>
</dbReference>
<dbReference type="Gene3D" id="3.30.160.60">
    <property type="entry name" value="Classic Zinc Finger"/>
    <property type="match status" value="1"/>
</dbReference>
<dbReference type="Gene3D" id="3.30.40.10">
    <property type="entry name" value="Zinc/RING finger domain, C3HC4 (zinc finger)"/>
    <property type="match status" value="1"/>
</dbReference>
<dbReference type="InterPro" id="IPR001870">
    <property type="entry name" value="B30.2/SPRY"/>
</dbReference>
<dbReference type="InterPro" id="IPR043136">
    <property type="entry name" value="B30.2/SPRY_sf"/>
</dbReference>
<dbReference type="InterPro" id="IPR003879">
    <property type="entry name" value="Butyrophylin_SPRY"/>
</dbReference>
<dbReference type="InterPro" id="IPR013320">
    <property type="entry name" value="ConA-like_dom_sf"/>
</dbReference>
<dbReference type="InterPro" id="IPR006574">
    <property type="entry name" value="PRY"/>
</dbReference>
<dbReference type="InterPro" id="IPR003877">
    <property type="entry name" value="SPRY_dom"/>
</dbReference>
<dbReference type="InterPro" id="IPR050143">
    <property type="entry name" value="TRIM/RBCC"/>
</dbReference>
<dbReference type="InterPro" id="IPR042784">
    <property type="entry name" value="TRIM10_RING-HC"/>
</dbReference>
<dbReference type="InterPro" id="IPR000315">
    <property type="entry name" value="Znf_B-box"/>
</dbReference>
<dbReference type="InterPro" id="IPR018957">
    <property type="entry name" value="Znf_C3HC4_RING-type"/>
</dbReference>
<dbReference type="InterPro" id="IPR001841">
    <property type="entry name" value="Znf_RING"/>
</dbReference>
<dbReference type="InterPro" id="IPR013083">
    <property type="entry name" value="Znf_RING/FYVE/PHD"/>
</dbReference>
<dbReference type="InterPro" id="IPR017907">
    <property type="entry name" value="Znf_RING_CS"/>
</dbReference>
<dbReference type="PANTHER" id="PTHR24103">
    <property type="entry name" value="E3 UBIQUITIN-PROTEIN LIGASE TRIM"/>
    <property type="match status" value="1"/>
</dbReference>
<dbReference type="Pfam" id="PF13765">
    <property type="entry name" value="PRY"/>
    <property type="match status" value="1"/>
</dbReference>
<dbReference type="Pfam" id="PF00622">
    <property type="entry name" value="SPRY"/>
    <property type="match status" value="1"/>
</dbReference>
<dbReference type="Pfam" id="PF00643">
    <property type="entry name" value="zf-B_box"/>
    <property type="match status" value="1"/>
</dbReference>
<dbReference type="Pfam" id="PF00097">
    <property type="entry name" value="zf-C3HC4"/>
    <property type="match status" value="1"/>
</dbReference>
<dbReference type="PRINTS" id="PR01407">
    <property type="entry name" value="BUTYPHLNCDUF"/>
</dbReference>
<dbReference type="SMART" id="SM00336">
    <property type="entry name" value="BBOX"/>
    <property type="match status" value="1"/>
</dbReference>
<dbReference type="SMART" id="SM00589">
    <property type="entry name" value="PRY"/>
    <property type="match status" value="1"/>
</dbReference>
<dbReference type="SMART" id="SM00184">
    <property type="entry name" value="RING"/>
    <property type="match status" value="1"/>
</dbReference>
<dbReference type="SMART" id="SM00449">
    <property type="entry name" value="SPRY"/>
    <property type="match status" value="1"/>
</dbReference>
<dbReference type="SUPFAM" id="SSF57845">
    <property type="entry name" value="B-box zinc-binding domain"/>
    <property type="match status" value="1"/>
</dbReference>
<dbReference type="SUPFAM" id="SSF49899">
    <property type="entry name" value="Concanavalin A-like lectins/glucanases"/>
    <property type="match status" value="1"/>
</dbReference>
<dbReference type="SUPFAM" id="SSF57850">
    <property type="entry name" value="RING/U-box"/>
    <property type="match status" value="1"/>
</dbReference>
<dbReference type="PROSITE" id="PS50188">
    <property type="entry name" value="B302_SPRY"/>
    <property type="match status" value="1"/>
</dbReference>
<dbReference type="PROSITE" id="PS50119">
    <property type="entry name" value="ZF_BBOX"/>
    <property type="match status" value="1"/>
</dbReference>
<dbReference type="PROSITE" id="PS00518">
    <property type="entry name" value="ZF_RING_1"/>
    <property type="match status" value="1"/>
</dbReference>
<dbReference type="PROSITE" id="PS50089">
    <property type="entry name" value="ZF_RING_2"/>
    <property type="match status" value="1"/>
</dbReference>
<keyword id="KW-0175">Coiled coil</keyword>
<keyword id="KW-0963">Cytoplasm</keyword>
<keyword id="KW-0479">Metal-binding</keyword>
<keyword id="KW-1185">Reference proteome</keyword>
<keyword id="KW-0862">Zinc</keyword>
<keyword id="KW-0863">Zinc-finger</keyword>
<organism>
    <name type="scientific">Pan troglodytes</name>
    <name type="common">Chimpanzee</name>
    <dbReference type="NCBI Taxonomy" id="9598"/>
    <lineage>
        <taxon>Eukaryota</taxon>
        <taxon>Metazoa</taxon>
        <taxon>Chordata</taxon>
        <taxon>Craniata</taxon>
        <taxon>Vertebrata</taxon>
        <taxon>Euteleostomi</taxon>
        <taxon>Mammalia</taxon>
        <taxon>Eutheria</taxon>
        <taxon>Euarchontoglires</taxon>
        <taxon>Primates</taxon>
        <taxon>Haplorrhini</taxon>
        <taxon>Catarrhini</taxon>
        <taxon>Hominidae</taxon>
        <taxon>Pan</taxon>
    </lineage>
</organism>
<gene>
    <name type="primary">TRIM10</name>
    <name type="synonym">RFB30</name>
    <name type="synonym">RNF9</name>
</gene>
<evidence type="ECO:0000250" key="1">
    <source>
        <dbReference type="UniProtKB" id="Q9UDY6"/>
    </source>
</evidence>
<evidence type="ECO:0000250" key="2">
    <source>
        <dbReference type="UniProtKB" id="Q9WUH5"/>
    </source>
</evidence>
<evidence type="ECO:0000255" key="3"/>
<evidence type="ECO:0000255" key="4">
    <source>
        <dbReference type="PROSITE-ProRule" id="PRU00024"/>
    </source>
</evidence>
<evidence type="ECO:0000255" key="5">
    <source>
        <dbReference type="PROSITE-ProRule" id="PRU00175"/>
    </source>
</evidence>
<evidence type="ECO:0000255" key="6">
    <source>
        <dbReference type="PROSITE-ProRule" id="PRU00548"/>
    </source>
</evidence>
<evidence type="ECO:0000305" key="7"/>
<feature type="chain" id="PRO_0000056213" description="Tripartite motif-containing protein 10">
    <location>
        <begin position="1"/>
        <end position="481"/>
    </location>
</feature>
<feature type="domain" description="B30.2/SPRY" evidence="6">
    <location>
        <begin position="292"/>
        <end position="481"/>
    </location>
</feature>
<feature type="zinc finger region" description="RING-type" evidence="5">
    <location>
        <begin position="16"/>
        <end position="61"/>
    </location>
</feature>
<feature type="zinc finger region" description="B box-type" evidence="4">
    <location>
        <begin position="94"/>
        <end position="135"/>
    </location>
</feature>
<feature type="coiled-coil region" evidence="3">
    <location>
        <begin position="142"/>
        <end position="177"/>
    </location>
</feature>
<feature type="binding site" evidence="4">
    <location>
        <position position="99"/>
    </location>
    <ligand>
        <name>Zn(2+)</name>
        <dbReference type="ChEBI" id="CHEBI:29105"/>
    </ligand>
</feature>
<feature type="binding site" evidence="4">
    <location>
        <position position="102"/>
    </location>
    <ligand>
        <name>Zn(2+)</name>
        <dbReference type="ChEBI" id="CHEBI:29105"/>
    </ligand>
</feature>
<feature type="binding site" evidence="4">
    <location>
        <position position="121"/>
    </location>
    <ligand>
        <name>Zn(2+)</name>
        <dbReference type="ChEBI" id="CHEBI:29105"/>
    </ligand>
</feature>
<feature type="binding site" evidence="4">
    <location>
        <position position="127"/>
    </location>
    <ligand>
        <name>Zn(2+)</name>
        <dbReference type="ChEBI" id="CHEBI:29105"/>
    </ligand>
</feature>